<protein>
    <recommendedName>
        <fullName evidence="1">N-acetylmuramic acid 6-phosphate etherase</fullName>
        <shortName evidence="1">MurNAc-6-P etherase</shortName>
        <ecNumber evidence="1">4.2.1.126</ecNumber>
    </recommendedName>
    <alternativeName>
        <fullName evidence="1">N-acetylmuramic acid 6-phosphate hydrolase</fullName>
    </alternativeName>
    <alternativeName>
        <fullName evidence="1">N-acetylmuramic acid 6-phosphate lyase</fullName>
    </alternativeName>
</protein>
<comment type="function">
    <text evidence="1">Specifically catalyzes the cleavage of the D-lactyl ether substituent of MurNAc 6-phosphate, producing GlcNAc 6-phosphate and D-lactate.</text>
</comment>
<comment type="catalytic activity">
    <reaction evidence="1">
        <text>N-acetyl-D-muramate 6-phosphate + H2O = N-acetyl-D-glucosamine 6-phosphate + (R)-lactate</text>
        <dbReference type="Rhea" id="RHEA:26410"/>
        <dbReference type="ChEBI" id="CHEBI:15377"/>
        <dbReference type="ChEBI" id="CHEBI:16004"/>
        <dbReference type="ChEBI" id="CHEBI:57513"/>
        <dbReference type="ChEBI" id="CHEBI:58722"/>
        <dbReference type="EC" id="4.2.1.126"/>
    </reaction>
</comment>
<comment type="pathway">
    <text evidence="1">Amino-sugar metabolism; N-acetylmuramate degradation.</text>
</comment>
<comment type="subunit">
    <text evidence="1">Homodimer.</text>
</comment>
<comment type="miscellaneous">
    <text evidence="1">A lyase-type mechanism (elimination/hydration) is suggested for the cleavage of the lactyl ether bond of MurNAc 6-phosphate, with the formation of an alpha,beta-unsaturated aldehyde intermediate with (E)-stereochemistry, followed by the syn addition of water to give product.</text>
</comment>
<comment type="similarity">
    <text evidence="1">Belongs to the GCKR-like family. MurNAc-6-P etherase subfamily.</text>
</comment>
<feature type="chain" id="PRO_0000249613" description="N-acetylmuramic acid 6-phosphate etherase">
    <location>
        <begin position="1"/>
        <end position="281"/>
    </location>
</feature>
<feature type="domain" description="SIS" evidence="1">
    <location>
        <begin position="63"/>
        <end position="226"/>
    </location>
</feature>
<feature type="active site" description="Proton donor" evidence="1">
    <location>
        <position position="91"/>
    </location>
</feature>
<feature type="active site" evidence="1">
    <location>
        <position position="122"/>
    </location>
</feature>
<evidence type="ECO:0000255" key="1">
    <source>
        <dbReference type="HAMAP-Rule" id="MF_00068"/>
    </source>
</evidence>
<proteinExistence type="inferred from homology"/>
<reference key="1">
    <citation type="journal article" date="2005" name="Science">
        <title>Extensive DNA inversions in the B. fragilis genome control variable gene expression.</title>
        <authorList>
            <person name="Cerdeno-Tarraga A.-M."/>
            <person name="Patrick S."/>
            <person name="Crossman L.C."/>
            <person name="Blakely G."/>
            <person name="Abratt V."/>
            <person name="Lennard N."/>
            <person name="Poxton I."/>
            <person name="Duerden B."/>
            <person name="Harris B."/>
            <person name="Quail M.A."/>
            <person name="Barron A."/>
            <person name="Clark L."/>
            <person name="Corton C."/>
            <person name="Doggett J."/>
            <person name="Holden M.T.G."/>
            <person name="Larke N."/>
            <person name="Line A."/>
            <person name="Lord A."/>
            <person name="Norbertczak H."/>
            <person name="Ormond D."/>
            <person name="Price C."/>
            <person name="Rabbinowitsch E."/>
            <person name="Woodward J."/>
            <person name="Barrell B.G."/>
            <person name="Parkhill J."/>
        </authorList>
    </citation>
    <scope>NUCLEOTIDE SEQUENCE [LARGE SCALE GENOMIC DNA]</scope>
    <source>
        <strain>ATCC 25285 / DSM 2151 / CCUG 4856 / JCM 11019 / LMG 10263 / NCTC 9343 / Onslow / VPI 2553 / EN-2</strain>
    </source>
</reference>
<gene>
    <name evidence="1" type="primary">murQ</name>
    <name type="ordered locus">BF0367</name>
</gene>
<sequence>MNSNIEKSDKPSFIKISEQPSLYDDLEKKSVREILEDINKEDQKVAIAVQKAIPQIEKLVTQIVPRMKQGGRIFYMGAGTSGRLGVLDASEIPPTFGMPPTLIIGLIAGGDTALRNPVENAEDNTTRGWEELTEHNINDKDTVIGIAASGTTPYVIGAMHAAREHGILTGCITSNPNSPMAAEADIPIEMIVGPEYVTGSSRMKSGTGQKMILNMITTSVMIQLGRVKGNKMVNMQLSNRKLVDRGTRMIIEELGLEYDKAKALLLMHGSVKKAIDAYKAG</sequence>
<name>MURQ_BACFN</name>
<accession>Q5LI89</accession>
<dbReference type="EC" id="4.2.1.126" evidence="1"/>
<dbReference type="EMBL" id="CR626927">
    <property type="protein sequence ID" value="CAH06137.1"/>
    <property type="molecule type" value="Genomic_DNA"/>
</dbReference>
<dbReference type="RefSeq" id="WP_005784228.1">
    <property type="nucleotide sequence ID" value="NZ_UFTH01000001.1"/>
</dbReference>
<dbReference type="SMR" id="Q5LI89"/>
<dbReference type="PaxDb" id="272559-BF9343_0358"/>
<dbReference type="GeneID" id="60368933"/>
<dbReference type="KEGG" id="bfs:BF9343_0358"/>
<dbReference type="eggNOG" id="COG2103">
    <property type="taxonomic scope" value="Bacteria"/>
</dbReference>
<dbReference type="HOGENOM" id="CLU_049049_1_1_10"/>
<dbReference type="UniPathway" id="UPA00342"/>
<dbReference type="Proteomes" id="UP000006731">
    <property type="component" value="Chromosome"/>
</dbReference>
<dbReference type="GO" id="GO:0097367">
    <property type="term" value="F:carbohydrate derivative binding"/>
    <property type="evidence" value="ECO:0007669"/>
    <property type="project" value="InterPro"/>
</dbReference>
<dbReference type="GO" id="GO:0016835">
    <property type="term" value="F:carbon-oxygen lyase activity"/>
    <property type="evidence" value="ECO:0007669"/>
    <property type="project" value="UniProtKB-UniRule"/>
</dbReference>
<dbReference type="GO" id="GO:0016803">
    <property type="term" value="F:ether hydrolase activity"/>
    <property type="evidence" value="ECO:0007669"/>
    <property type="project" value="TreeGrafter"/>
</dbReference>
<dbReference type="GO" id="GO:0046348">
    <property type="term" value="P:amino sugar catabolic process"/>
    <property type="evidence" value="ECO:0007669"/>
    <property type="project" value="InterPro"/>
</dbReference>
<dbReference type="GO" id="GO:0097173">
    <property type="term" value="P:N-acetylmuramic acid catabolic process"/>
    <property type="evidence" value="ECO:0007669"/>
    <property type="project" value="UniProtKB-UniPathway"/>
</dbReference>
<dbReference type="GO" id="GO:0009254">
    <property type="term" value="P:peptidoglycan turnover"/>
    <property type="evidence" value="ECO:0007669"/>
    <property type="project" value="TreeGrafter"/>
</dbReference>
<dbReference type="CDD" id="cd05007">
    <property type="entry name" value="SIS_Etherase"/>
    <property type="match status" value="1"/>
</dbReference>
<dbReference type="FunFam" id="3.40.50.10490:FF:000014">
    <property type="entry name" value="N-acetylmuramic acid 6-phosphate etherase"/>
    <property type="match status" value="1"/>
</dbReference>
<dbReference type="Gene3D" id="3.40.50.10490">
    <property type="entry name" value="Glucose-6-phosphate isomerase like protein, domain 1"/>
    <property type="match status" value="1"/>
</dbReference>
<dbReference type="HAMAP" id="MF_00068">
    <property type="entry name" value="MurQ"/>
    <property type="match status" value="1"/>
</dbReference>
<dbReference type="InterPro" id="IPR005488">
    <property type="entry name" value="Etherase_MurQ"/>
</dbReference>
<dbReference type="InterPro" id="IPR005486">
    <property type="entry name" value="Glucokinase_regulatory_CS"/>
</dbReference>
<dbReference type="InterPro" id="IPR040190">
    <property type="entry name" value="MURQ/GCKR"/>
</dbReference>
<dbReference type="InterPro" id="IPR001347">
    <property type="entry name" value="SIS_dom"/>
</dbReference>
<dbReference type="InterPro" id="IPR046348">
    <property type="entry name" value="SIS_dom_sf"/>
</dbReference>
<dbReference type="NCBIfam" id="TIGR00274">
    <property type="entry name" value="N-acetylmuramic acid 6-phosphate etherase"/>
    <property type="match status" value="1"/>
</dbReference>
<dbReference type="NCBIfam" id="NF003915">
    <property type="entry name" value="PRK05441.1"/>
    <property type="match status" value="1"/>
</dbReference>
<dbReference type="NCBIfam" id="NF009222">
    <property type="entry name" value="PRK12570.1"/>
    <property type="match status" value="1"/>
</dbReference>
<dbReference type="PANTHER" id="PTHR10088">
    <property type="entry name" value="GLUCOKINASE REGULATORY PROTEIN"/>
    <property type="match status" value="1"/>
</dbReference>
<dbReference type="PANTHER" id="PTHR10088:SF4">
    <property type="entry name" value="GLUCOKINASE REGULATORY PROTEIN"/>
    <property type="match status" value="1"/>
</dbReference>
<dbReference type="Pfam" id="PF22645">
    <property type="entry name" value="GKRP_SIS_N"/>
    <property type="match status" value="1"/>
</dbReference>
<dbReference type="SUPFAM" id="SSF53697">
    <property type="entry name" value="SIS domain"/>
    <property type="match status" value="1"/>
</dbReference>
<dbReference type="PROSITE" id="PS01272">
    <property type="entry name" value="GCKR"/>
    <property type="match status" value="1"/>
</dbReference>
<dbReference type="PROSITE" id="PS51464">
    <property type="entry name" value="SIS"/>
    <property type="match status" value="1"/>
</dbReference>
<keyword id="KW-0119">Carbohydrate metabolism</keyword>
<keyword id="KW-0456">Lyase</keyword>
<organism>
    <name type="scientific">Bacteroides fragilis (strain ATCC 25285 / DSM 2151 / CCUG 4856 / JCM 11019 / LMG 10263 / NCTC 9343 / Onslow / VPI 2553 / EN-2)</name>
    <dbReference type="NCBI Taxonomy" id="272559"/>
    <lineage>
        <taxon>Bacteria</taxon>
        <taxon>Pseudomonadati</taxon>
        <taxon>Bacteroidota</taxon>
        <taxon>Bacteroidia</taxon>
        <taxon>Bacteroidales</taxon>
        <taxon>Bacteroidaceae</taxon>
        <taxon>Bacteroides</taxon>
    </lineage>
</organism>